<name>EIF3H_ASPTN</name>
<organism>
    <name type="scientific">Aspergillus terreus (strain NIH 2624 / FGSC A1156)</name>
    <dbReference type="NCBI Taxonomy" id="341663"/>
    <lineage>
        <taxon>Eukaryota</taxon>
        <taxon>Fungi</taxon>
        <taxon>Dikarya</taxon>
        <taxon>Ascomycota</taxon>
        <taxon>Pezizomycotina</taxon>
        <taxon>Eurotiomycetes</taxon>
        <taxon>Eurotiomycetidae</taxon>
        <taxon>Eurotiales</taxon>
        <taxon>Aspergillaceae</taxon>
        <taxon>Aspergillus</taxon>
        <taxon>Aspergillus subgen. Circumdati</taxon>
    </lineage>
</organism>
<accession>Q0D1J4</accession>
<sequence>MAEKEVPLTAVKVEALVVMKIIKHCSQTFPTTATGSIVGMDAEGTLEITNSFPFPVVEMPAESHFDNTAPNPAAAAPRAKANTVYQAEMIRMLREVNVDANNVGWYTSANMGNFVNMNVIENQYFYQKEMNERTVALVHDVSRSAQGSLSLRAFRLSPKFMAAFKENKFTAEELQKSGLRYQDIFVELPVEIHNSHLITTFLHQLQCPRQSAPTDLPPSLAALESGPFVKDTILAPNYDNLSLSIDPFLEKNCDLLLDSIETHNTETNNFQYYQRSFTREQTKINQWIAKRKAENASRATLKQPPLPEDEWQRLFKLPQEPSRLESMLNSRQVEQYARQVDSFVSATTGKMFAVKGNLLPGETAK</sequence>
<dbReference type="EMBL" id="CH476594">
    <property type="protein sequence ID" value="EAU38836.1"/>
    <property type="molecule type" value="Genomic_DNA"/>
</dbReference>
<dbReference type="RefSeq" id="XP_001210276.1">
    <property type="nucleotide sequence ID" value="XM_001210276.1"/>
</dbReference>
<dbReference type="SMR" id="Q0D1J4"/>
<dbReference type="STRING" id="341663.Q0D1J4"/>
<dbReference type="EnsemblFungi" id="EAU38836">
    <property type="protein sequence ID" value="EAU38836"/>
    <property type="gene ID" value="ATEG_00190"/>
</dbReference>
<dbReference type="GeneID" id="4354939"/>
<dbReference type="VEuPathDB" id="FungiDB:ATEG_00190"/>
<dbReference type="eggNOG" id="KOG1560">
    <property type="taxonomic scope" value="Eukaryota"/>
</dbReference>
<dbReference type="HOGENOM" id="CLU_044094_1_0_1"/>
<dbReference type="OMA" id="WYQSTYF"/>
<dbReference type="OrthoDB" id="10265695at2759"/>
<dbReference type="Proteomes" id="UP000007963">
    <property type="component" value="Unassembled WGS sequence"/>
</dbReference>
<dbReference type="GO" id="GO:0016282">
    <property type="term" value="C:eukaryotic 43S preinitiation complex"/>
    <property type="evidence" value="ECO:0007669"/>
    <property type="project" value="UniProtKB-UniRule"/>
</dbReference>
<dbReference type="GO" id="GO:0033290">
    <property type="term" value="C:eukaryotic 48S preinitiation complex"/>
    <property type="evidence" value="ECO:0007669"/>
    <property type="project" value="UniProtKB-UniRule"/>
</dbReference>
<dbReference type="GO" id="GO:0005852">
    <property type="term" value="C:eukaryotic translation initiation factor 3 complex"/>
    <property type="evidence" value="ECO:0007669"/>
    <property type="project" value="UniProtKB-UniRule"/>
</dbReference>
<dbReference type="GO" id="GO:0008237">
    <property type="term" value="F:metallopeptidase activity"/>
    <property type="evidence" value="ECO:0007669"/>
    <property type="project" value="InterPro"/>
</dbReference>
<dbReference type="GO" id="GO:0003743">
    <property type="term" value="F:translation initiation factor activity"/>
    <property type="evidence" value="ECO:0007669"/>
    <property type="project" value="UniProtKB-UniRule"/>
</dbReference>
<dbReference type="GO" id="GO:0001732">
    <property type="term" value="P:formation of cytoplasmic translation initiation complex"/>
    <property type="evidence" value="ECO:0007669"/>
    <property type="project" value="UniProtKB-UniRule"/>
</dbReference>
<dbReference type="CDD" id="cd08065">
    <property type="entry name" value="MPN_eIF3h"/>
    <property type="match status" value="1"/>
</dbReference>
<dbReference type="FunFam" id="3.40.140.10:FF:000052">
    <property type="entry name" value="Eukaryotic translation initiation factor 3 subunit H"/>
    <property type="match status" value="1"/>
</dbReference>
<dbReference type="Gene3D" id="3.40.140.10">
    <property type="entry name" value="Cytidine Deaminase, domain 2"/>
    <property type="match status" value="1"/>
</dbReference>
<dbReference type="HAMAP" id="MF_03007">
    <property type="entry name" value="eIF3h"/>
    <property type="match status" value="1"/>
</dbReference>
<dbReference type="InterPro" id="IPR027524">
    <property type="entry name" value="eIF3h"/>
</dbReference>
<dbReference type="InterPro" id="IPR045810">
    <property type="entry name" value="eIF3h_C"/>
</dbReference>
<dbReference type="InterPro" id="IPR000555">
    <property type="entry name" value="JAMM/MPN+_dom"/>
</dbReference>
<dbReference type="InterPro" id="IPR050242">
    <property type="entry name" value="JAMM_MPN+_peptidase_M67A"/>
</dbReference>
<dbReference type="InterPro" id="IPR037518">
    <property type="entry name" value="MPN"/>
</dbReference>
<dbReference type="PANTHER" id="PTHR10410">
    <property type="entry name" value="EUKARYOTIC TRANSLATION INITIATION FACTOR 3 -RELATED"/>
    <property type="match status" value="1"/>
</dbReference>
<dbReference type="Pfam" id="PF19445">
    <property type="entry name" value="eIF3h_C"/>
    <property type="match status" value="2"/>
</dbReference>
<dbReference type="Pfam" id="PF01398">
    <property type="entry name" value="JAB"/>
    <property type="match status" value="1"/>
</dbReference>
<dbReference type="SMART" id="SM00232">
    <property type="entry name" value="JAB_MPN"/>
    <property type="match status" value="1"/>
</dbReference>
<dbReference type="PROSITE" id="PS50249">
    <property type="entry name" value="MPN"/>
    <property type="match status" value="1"/>
</dbReference>
<feature type="chain" id="PRO_0000365204" description="Eukaryotic translation initiation factor 3 subunit H">
    <location>
        <begin position="1"/>
        <end position="365"/>
    </location>
</feature>
<feature type="domain" description="MPN" evidence="2">
    <location>
        <begin position="11"/>
        <end position="160"/>
    </location>
</feature>
<keyword id="KW-0963">Cytoplasm</keyword>
<keyword id="KW-0396">Initiation factor</keyword>
<keyword id="KW-0648">Protein biosynthesis</keyword>
<keyword id="KW-1185">Reference proteome</keyword>
<protein>
    <recommendedName>
        <fullName evidence="1">Eukaryotic translation initiation factor 3 subunit H</fullName>
        <shortName evidence="1">eIF3h</shortName>
    </recommendedName>
</protein>
<proteinExistence type="inferred from homology"/>
<reference key="1">
    <citation type="submission" date="2005-09" db="EMBL/GenBank/DDBJ databases">
        <title>Annotation of the Aspergillus terreus NIH2624 genome.</title>
        <authorList>
            <person name="Birren B.W."/>
            <person name="Lander E.S."/>
            <person name="Galagan J.E."/>
            <person name="Nusbaum C."/>
            <person name="Devon K."/>
            <person name="Henn M."/>
            <person name="Ma L.-J."/>
            <person name="Jaffe D.B."/>
            <person name="Butler J."/>
            <person name="Alvarez P."/>
            <person name="Gnerre S."/>
            <person name="Grabherr M."/>
            <person name="Kleber M."/>
            <person name="Mauceli E.W."/>
            <person name="Brockman W."/>
            <person name="Rounsley S."/>
            <person name="Young S.K."/>
            <person name="LaButti K."/>
            <person name="Pushparaj V."/>
            <person name="DeCaprio D."/>
            <person name="Crawford M."/>
            <person name="Koehrsen M."/>
            <person name="Engels R."/>
            <person name="Montgomery P."/>
            <person name="Pearson M."/>
            <person name="Howarth C."/>
            <person name="Larson L."/>
            <person name="Luoma S."/>
            <person name="White J."/>
            <person name="Alvarado L."/>
            <person name="Kodira C.D."/>
            <person name="Zeng Q."/>
            <person name="Oleary S."/>
            <person name="Yandava C."/>
            <person name="Denning D.W."/>
            <person name="Nierman W.C."/>
            <person name="Milne T."/>
            <person name="Madden K."/>
        </authorList>
    </citation>
    <scope>NUCLEOTIDE SEQUENCE [LARGE SCALE GENOMIC DNA]</scope>
    <source>
        <strain>NIH 2624 / FGSC A1156</strain>
    </source>
</reference>
<comment type="function">
    <text evidence="1">Component of the eukaryotic translation initiation factor 3 (eIF-3) complex, which is involved in protein synthesis of a specialized repertoire of mRNAs and, together with other initiation factors, stimulates binding of mRNA and methionyl-tRNAi to the 40S ribosome. The eIF-3 complex specifically targets and initiates translation of a subset of mRNAs involved in cell proliferation.</text>
</comment>
<comment type="subunit">
    <text evidence="1">Component of the eukaryotic translation initiation factor 3 (eIF-3) complex.</text>
</comment>
<comment type="subcellular location">
    <subcellularLocation>
        <location evidence="1">Cytoplasm</location>
    </subcellularLocation>
</comment>
<comment type="similarity">
    <text evidence="1">Belongs to the eIF-3 subunit H family.</text>
</comment>
<gene>
    <name type="ORF">ATEG_00190</name>
</gene>
<evidence type="ECO:0000255" key="1">
    <source>
        <dbReference type="HAMAP-Rule" id="MF_03007"/>
    </source>
</evidence>
<evidence type="ECO:0000255" key="2">
    <source>
        <dbReference type="PROSITE-ProRule" id="PRU01182"/>
    </source>
</evidence>